<dbReference type="EMBL" id="CP000408">
    <property type="protein sequence ID" value="ABP91777.1"/>
    <property type="molecule type" value="Genomic_DNA"/>
</dbReference>
<dbReference type="SMR" id="A4W088"/>
<dbReference type="KEGG" id="ssv:SSU98_0619"/>
<dbReference type="HOGENOM" id="CLU_059558_0_0_9"/>
<dbReference type="BioCyc" id="SSUI391296:GI2E-669-MONOMER"/>
<dbReference type="GO" id="GO:0005524">
    <property type="term" value="F:ATP binding"/>
    <property type="evidence" value="ECO:0007669"/>
    <property type="project" value="UniProtKB-UniRule"/>
</dbReference>
<dbReference type="GO" id="GO:0005525">
    <property type="term" value="F:GTP binding"/>
    <property type="evidence" value="ECO:0007669"/>
    <property type="project" value="UniProtKB-UniRule"/>
</dbReference>
<dbReference type="Gene3D" id="3.40.50.300">
    <property type="entry name" value="P-loop containing nucleotide triphosphate hydrolases"/>
    <property type="match status" value="1"/>
</dbReference>
<dbReference type="HAMAP" id="MF_00636">
    <property type="entry name" value="RapZ_like"/>
    <property type="match status" value="1"/>
</dbReference>
<dbReference type="InterPro" id="IPR027417">
    <property type="entry name" value="P-loop_NTPase"/>
</dbReference>
<dbReference type="InterPro" id="IPR005337">
    <property type="entry name" value="RapZ-like"/>
</dbReference>
<dbReference type="InterPro" id="IPR053930">
    <property type="entry name" value="RapZ-like_N"/>
</dbReference>
<dbReference type="InterPro" id="IPR053931">
    <property type="entry name" value="RapZ_C"/>
</dbReference>
<dbReference type="NCBIfam" id="NF003828">
    <property type="entry name" value="PRK05416.1"/>
    <property type="match status" value="1"/>
</dbReference>
<dbReference type="PANTHER" id="PTHR30448">
    <property type="entry name" value="RNASE ADAPTER PROTEIN RAPZ"/>
    <property type="match status" value="1"/>
</dbReference>
<dbReference type="PANTHER" id="PTHR30448:SF0">
    <property type="entry name" value="RNASE ADAPTER PROTEIN RAPZ"/>
    <property type="match status" value="1"/>
</dbReference>
<dbReference type="Pfam" id="PF22740">
    <property type="entry name" value="PapZ_C"/>
    <property type="match status" value="1"/>
</dbReference>
<dbReference type="Pfam" id="PF03668">
    <property type="entry name" value="RapZ-like_N"/>
    <property type="match status" value="1"/>
</dbReference>
<dbReference type="PIRSF" id="PIRSF005052">
    <property type="entry name" value="P-loopkin"/>
    <property type="match status" value="1"/>
</dbReference>
<dbReference type="SUPFAM" id="SSF52540">
    <property type="entry name" value="P-loop containing nucleoside triphosphate hydrolases"/>
    <property type="match status" value="1"/>
</dbReference>
<accession>A4W088</accession>
<keyword id="KW-0067">ATP-binding</keyword>
<keyword id="KW-0342">GTP-binding</keyword>
<keyword id="KW-0547">Nucleotide-binding</keyword>
<reference key="1">
    <citation type="journal article" date="2007" name="PLoS ONE">
        <title>A glimpse of streptococcal toxic shock syndrome from comparative genomics of S. suis 2 Chinese isolates.</title>
        <authorList>
            <person name="Chen C."/>
            <person name="Tang J."/>
            <person name="Dong W."/>
            <person name="Wang C."/>
            <person name="Feng Y."/>
            <person name="Wang J."/>
            <person name="Zheng F."/>
            <person name="Pan X."/>
            <person name="Liu D."/>
            <person name="Li M."/>
            <person name="Song Y."/>
            <person name="Zhu X."/>
            <person name="Sun H."/>
            <person name="Feng T."/>
            <person name="Guo Z."/>
            <person name="Ju A."/>
            <person name="Ge J."/>
            <person name="Dong Y."/>
            <person name="Sun W."/>
            <person name="Jiang Y."/>
            <person name="Wang J."/>
            <person name="Yan J."/>
            <person name="Yang H."/>
            <person name="Wang X."/>
            <person name="Gao G.F."/>
            <person name="Yang R."/>
            <person name="Wang J."/>
            <person name="Yu J."/>
        </authorList>
    </citation>
    <scope>NUCLEOTIDE SEQUENCE [LARGE SCALE GENOMIC DNA]</scope>
    <source>
        <strain>98HAH33</strain>
    </source>
</reference>
<feature type="chain" id="PRO_1000056866" description="Nucleotide-binding protein SSU98_0619">
    <location>
        <begin position="1"/>
        <end position="295"/>
    </location>
</feature>
<feature type="binding site" evidence="1">
    <location>
        <begin position="12"/>
        <end position="19"/>
    </location>
    <ligand>
        <name>ATP</name>
        <dbReference type="ChEBI" id="CHEBI:30616"/>
    </ligand>
</feature>
<feature type="binding site" evidence="1">
    <location>
        <begin position="62"/>
        <end position="65"/>
    </location>
    <ligand>
        <name>GTP</name>
        <dbReference type="ChEBI" id="CHEBI:37565"/>
    </ligand>
</feature>
<organism>
    <name type="scientific">Streptococcus suis (strain 98HAH33)</name>
    <dbReference type="NCBI Taxonomy" id="391296"/>
    <lineage>
        <taxon>Bacteria</taxon>
        <taxon>Bacillati</taxon>
        <taxon>Bacillota</taxon>
        <taxon>Bacilli</taxon>
        <taxon>Lactobacillales</taxon>
        <taxon>Streptococcaceae</taxon>
        <taxon>Streptococcus</taxon>
    </lineage>
</organism>
<protein>
    <recommendedName>
        <fullName evidence="1">Nucleotide-binding protein SSU98_0619</fullName>
    </recommendedName>
</protein>
<sequence length="295" mass="33666">MSDKLHLVIVTGMSGAGKTVAIQSFEDLGYFTIDNMPPTLLPKFLELIRHSQDNNKIALVVDMRSRSFFSEIREVLDEIEGAEDLDFKVLFLDATDSELVARYKETRRSHPLAADGRVLDGIQLERELLAPLKNMSQNVIDTTELTPRNLRKVISEQFASQDNQPSFRIEVMSFGFKYGLPLDADLVFDVRFLPNPYYKLELRNLTGLDAPVFDYVMEHQESEEFYSHLLGLIEPILPGYQKEGKSVLTIAVGCTGGQHRSVAFAKRLADDLEKNWNVNRSHRDKDRRKETVNRS</sequence>
<comment type="function">
    <text evidence="1">Displays ATPase and GTPase activities.</text>
</comment>
<comment type="similarity">
    <text evidence="1">Belongs to the RapZ-like family.</text>
</comment>
<name>Y619_STRS2</name>
<proteinExistence type="inferred from homology"/>
<gene>
    <name type="ordered locus">SSU98_0619</name>
</gene>
<evidence type="ECO:0000255" key="1">
    <source>
        <dbReference type="HAMAP-Rule" id="MF_00636"/>
    </source>
</evidence>